<keyword id="KW-0134">Cell wall</keyword>
<keyword id="KW-0961">Cell wall biogenesis/degradation</keyword>
<keyword id="KW-0325">Glycoprotein</keyword>
<keyword id="KW-0379">Hydroxylation</keyword>
<keyword id="KW-1185">Reference proteome</keyword>
<keyword id="KW-0677">Repeat</keyword>
<keyword id="KW-0964">Secreted</keyword>
<keyword id="KW-0732">Signal</keyword>
<proteinExistence type="evidence at transcript level"/>
<gene>
    <name type="primary">HRGP</name>
</gene>
<comment type="function">
    <text>Structural component in primary cell wall.</text>
</comment>
<comment type="subcellular location">
    <subcellularLocation>
        <location>Secreted</location>
        <location>Primary cell wall</location>
    </subcellularLocation>
</comment>
<comment type="tissue specificity">
    <text>Mainly in the coleoptile node and root tip.</text>
</comment>
<comment type="PTM">
    <text>Hydroxylated on proline residues in the S-P-P-P-P repeat.</text>
</comment>
<comment type="PTM">
    <text>O-glycosylated on hydroxyprolines.</text>
</comment>
<feature type="signal peptide" evidence="1">
    <location>
        <begin position="1"/>
        <end status="unknown"/>
    </location>
</feature>
<feature type="chain" id="PRO_0000008729" description="Extensin">
    <location>
        <begin status="unknown"/>
        <end position="267"/>
    </location>
</feature>
<feature type="repeat">
    <location>
        <begin position="18"/>
        <end position="33"/>
    </location>
</feature>
<feature type="repeat">
    <location>
        <begin position="34"/>
        <end position="54"/>
    </location>
</feature>
<feature type="repeat">
    <location>
        <begin position="55"/>
        <end position="70"/>
    </location>
</feature>
<feature type="repeat">
    <location>
        <begin position="71"/>
        <end position="91"/>
    </location>
</feature>
<feature type="repeat">
    <location>
        <begin position="92"/>
        <end position="107"/>
    </location>
</feature>
<feature type="repeat">
    <location>
        <begin position="108"/>
        <end position="128"/>
    </location>
</feature>
<feature type="repeat">
    <location>
        <begin position="129"/>
        <end position="144"/>
    </location>
</feature>
<feature type="repeat">
    <location>
        <begin position="145"/>
        <end position="160"/>
    </location>
</feature>
<feature type="repeat">
    <location>
        <begin position="161"/>
        <end position="179"/>
    </location>
</feature>
<feature type="repeat">
    <location>
        <begin position="180"/>
        <end position="195"/>
    </location>
</feature>
<feature type="repeat">
    <location>
        <begin position="196"/>
        <end position="211"/>
    </location>
</feature>
<feature type="repeat">
    <location>
        <begin position="212"/>
        <end position="232"/>
    </location>
</feature>
<feature type="repeat">
    <location>
        <begin position="233"/>
        <end position="253"/>
    </location>
</feature>
<feature type="region of interest" description="Disordered" evidence="2">
    <location>
        <begin position="1"/>
        <end position="267"/>
    </location>
</feature>
<feature type="region of interest" description="Highly repetitive">
    <location>
        <begin position="18"/>
        <end position="253"/>
    </location>
</feature>
<feature type="region of interest" description="Extensin repetitive element">
    <location>
        <begin position="261"/>
        <end position="265"/>
    </location>
</feature>
<feature type="compositionally biased region" description="Pro residues" evidence="2">
    <location>
        <begin position="20"/>
        <end position="267"/>
    </location>
</feature>
<feature type="sequence variant" description="In strain: cv. E41.">
    <location>
        <position position="245"/>
    </location>
</feature>
<feature type="sequence variant" description="In strain: cv. E41.">
    <original>S</original>
    <variation>C</variation>
    <location>
        <position position="261"/>
    </location>
</feature>
<sequence length="267" mass="28349">MCPAFSIFFNSRRYSLTPPTYTPSPKPPTPKPTPPTYTPSPKPPASKPPTPKPTPPTYTPSPKPPTPKPTPPTYTPSPKPPATKPPTPKPTPPTYTPSPKPPTPKPTPPTYTPSPKPPATKPPTPKPTPPTYTPSPKPPTPKPTPPTYTPSPKPPTPKPTPPTYTPSPKPPTHPTPKPTPPTYTPSPKPPTPKPTPPTYTPSPKPPTPKPTPPTYTPSPKPPATKPPTPKPTPPTYTPTPKPPATKPPTYTPTPPVSHTPSPPPPYY</sequence>
<evidence type="ECO:0000255" key="1"/>
<evidence type="ECO:0000256" key="2">
    <source>
        <dbReference type="SAM" id="MobiDB-lite"/>
    </source>
</evidence>
<dbReference type="EMBL" id="X13499">
    <property type="protein sequence ID" value="CAA31854.1"/>
    <property type="molecule type" value="mRNA"/>
</dbReference>
<dbReference type="EMBL" id="X13506">
    <property type="protein sequence ID" value="CAA31860.1"/>
    <property type="molecule type" value="mRNA"/>
</dbReference>
<dbReference type="EMBL" id="M36912">
    <property type="protein sequence ID" value="AAA33455.1"/>
    <property type="molecule type" value="mRNA"/>
</dbReference>
<dbReference type="EMBL" id="M36913">
    <property type="protein sequence ID" value="AAA33456.1"/>
    <property type="molecule type" value="mRNA"/>
</dbReference>
<dbReference type="EMBL" id="M36914">
    <property type="protein sequence ID" value="AAA33457.1"/>
    <property type="molecule type" value="mRNA"/>
</dbReference>
<dbReference type="PIR" id="S08314">
    <property type="entry name" value="S08314"/>
</dbReference>
<dbReference type="STRING" id="4577.P14918"/>
<dbReference type="MaizeGDB" id="17152"/>
<dbReference type="InParanoid" id="P14918"/>
<dbReference type="Proteomes" id="UP000007305">
    <property type="component" value="Unplaced"/>
</dbReference>
<dbReference type="GO" id="GO:0005576">
    <property type="term" value="C:extracellular region"/>
    <property type="evidence" value="ECO:0007669"/>
    <property type="project" value="UniProtKB-KW"/>
</dbReference>
<dbReference type="GO" id="GO:0009530">
    <property type="term" value="C:primary cell wall"/>
    <property type="evidence" value="ECO:0007669"/>
    <property type="project" value="UniProtKB-SubCell"/>
</dbReference>
<dbReference type="GO" id="GO:0071555">
    <property type="term" value="P:cell wall organization"/>
    <property type="evidence" value="ECO:0007669"/>
    <property type="project" value="UniProtKB-KW"/>
</dbReference>
<dbReference type="PRINTS" id="PR01217">
    <property type="entry name" value="PRICHEXTENSN"/>
</dbReference>
<name>EXTN_MAIZE</name>
<organism>
    <name type="scientific">Zea mays</name>
    <name type="common">Maize</name>
    <dbReference type="NCBI Taxonomy" id="4577"/>
    <lineage>
        <taxon>Eukaryota</taxon>
        <taxon>Viridiplantae</taxon>
        <taxon>Streptophyta</taxon>
        <taxon>Embryophyta</taxon>
        <taxon>Tracheophyta</taxon>
        <taxon>Spermatophyta</taxon>
        <taxon>Magnoliopsida</taxon>
        <taxon>Liliopsida</taxon>
        <taxon>Poales</taxon>
        <taxon>Poaceae</taxon>
        <taxon>PACMAD clade</taxon>
        <taxon>Panicoideae</taxon>
        <taxon>Andropogonodae</taxon>
        <taxon>Andropogoneae</taxon>
        <taxon>Tripsacinae</taxon>
        <taxon>Zea</taxon>
    </lineage>
</organism>
<protein>
    <recommendedName>
        <fullName>Extensin</fullName>
    </recommendedName>
    <alternativeName>
        <fullName>Proline-rich glycoprotein</fullName>
    </alternativeName>
</protein>
<reference key="1">
    <citation type="journal article" date="1988" name="Plant Mol. Biol.">
        <title>Molecular cloning of cDNAs encoding a putative cell wall protein from Zea mays and immunological identification of related polypeptides.</title>
        <authorList>
            <person name="Stiefel V."/>
            <person name="Perez-Grau L."/>
            <person name="Albericio F."/>
            <person name="Giralt E."/>
            <person name="Ruiz-Avila L."/>
            <person name="Ludevid M.D."/>
            <person name="Puigdomenech P."/>
        </authorList>
        <dbReference type="AGRICOLA" id="IND92000026"/>
    </citation>
    <scope>NUCLEOTIDE SEQUENCE [MRNA]</scope>
    <source>
        <strain>cv. E41</strain>
        <strain>cv. Wisconsin 64A</strain>
    </source>
</reference>
<accession>P14918</accession>